<organism>
    <name type="scientific">Sodalis glossinidius (strain morsitans)</name>
    <dbReference type="NCBI Taxonomy" id="343509"/>
    <lineage>
        <taxon>Bacteria</taxon>
        <taxon>Pseudomonadati</taxon>
        <taxon>Pseudomonadota</taxon>
        <taxon>Gammaproteobacteria</taxon>
        <taxon>Enterobacterales</taxon>
        <taxon>Bruguierivoracaceae</taxon>
        <taxon>Sodalis</taxon>
    </lineage>
</organism>
<protein>
    <recommendedName>
        <fullName evidence="1">Multifunctional CCA protein</fullName>
    </recommendedName>
    <domain>
        <recommendedName>
            <fullName evidence="1">CCA-adding enzyme</fullName>
            <ecNumber evidence="1">2.7.7.72</ecNumber>
        </recommendedName>
        <alternativeName>
            <fullName evidence="1">CCA tRNA nucleotidyltransferase</fullName>
        </alternativeName>
        <alternativeName>
            <fullName evidence="1">tRNA CCA-pyrophosphorylase</fullName>
        </alternativeName>
        <alternativeName>
            <fullName evidence="1">tRNA adenylyl-/cytidylyl-transferase</fullName>
        </alternativeName>
        <alternativeName>
            <fullName evidence="1">tRNA nucleotidyltransferase</fullName>
        </alternativeName>
        <alternativeName>
            <fullName evidence="1">tRNA-NT</fullName>
        </alternativeName>
    </domain>
    <domain>
        <recommendedName>
            <fullName evidence="1">2'-nucleotidase</fullName>
            <ecNumber evidence="1">3.1.3.-</ecNumber>
        </recommendedName>
    </domain>
    <domain>
        <recommendedName>
            <fullName evidence="1">2',3'-cyclic phosphodiesterase</fullName>
            <ecNumber evidence="1">3.1.4.-</ecNumber>
        </recommendedName>
    </domain>
    <domain>
        <recommendedName>
            <fullName evidence="1">Phosphatase</fullName>
            <ecNumber evidence="1">3.1.3.-</ecNumber>
        </recommendedName>
    </domain>
</protein>
<keyword id="KW-0067">ATP-binding</keyword>
<keyword id="KW-0378">Hydrolase</keyword>
<keyword id="KW-0460">Magnesium</keyword>
<keyword id="KW-0479">Metal-binding</keyword>
<keyword id="KW-0511">Multifunctional enzyme</keyword>
<keyword id="KW-0533">Nickel</keyword>
<keyword id="KW-0547">Nucleotide-binding</keyword>
<keyword id="KW-0548">Nucleotidyltransferase</keyword>
<keyword id="KW-0692">RNA repair</keyword>
<keyword id="KW-0694">RNA-binding</keyword>
<keyword id="KW-0808">Transferase</keyword>
<keyword id="KW-0819">tRNA processing</keyword>
<dbReference type="EC" id="2.7.7.72" evidence="1"/>
<dbReference type="EC" id="3.1.3.-" evidence="1"/>
<dbReference type="EC" id="3.1.4.-" evidence="1"/>
<dbReference type="EMBL" id="AP008232">
    <property type="protein sequence ID" value="BAE73533.1"/>
    <property type="molecule type" value="Genomic_DNA"/>
</dbReference>
<dbReference type="RefSeq" id="WP_011410121.1">
    <property type="nucleotide sequence ID" value="NC_007712.1"/>
</dbReference>
<dbReference type="SMR" id="Q2NWE2"/>
<dbReference type="STRING" id="343509.SG0258"/>
<dbReference type="KEGG" id="sgl:SG0258"/>
<dbReference type="eggNOG" id="COG0617">
    <property type="taxonomic scope" value="Bacteria"/>
</dbReference>
<dbReference type="HOGENOM" id="CLU_015961_1_1_6"/>
<dbReference type="OrthoDB" id="9805698at2"/>
<dbReference type="BioCyc" id="SGLO343509:SGP1_RS02430-MONOMER"/>
<dbReference type="Proteomes" id="UP000001932">
    <property type="component" value="Chromosome"/>
</dbReference>
<dbReference type="GO" id="GO:0005524">
    <property type="term" value="F:ATP binding"/>
    <property type="evidence" value="ECO:0007669"/>
    <property type="project" value="UniProtKB-UniRule"/>
</dbReference>
<dbReference type="GO" id="GO:0004810">
    <property type="term" value="F:CCA tRNA nucleotidyltransferase activity"/>
    <property type="evidence" value="ECO:0007669"/>
    <property type="project" value="UniProtKB-UniRule"/>
</dbReference>
<dbReference type="GO" id="GO:0004112">
    <property type="term" value="F:cyclic-nucleotide phosphodiesterase activity"/>
    <property type="evidence" value="ECO:0007669"/>
    <property type="project" value="UniProtKB-UniRule"/>
</dbReference>
<dbReference type="GO" id="GO:0000287">
    <property type="term" value="F:magnesium ion binding"/>
    <property type="evidence" value="ECO:0007669"/>
    <property type="project" value="UniProtKB-UniRule"/>
</dbReference>
<dbReference type="GO" id="GO:0016791">
    <property type="term" value="F:phosphatase activity"/>
    <property type="evidence" value="ECO:0007669"/>
    <property type="project" value="UniProtKB-UniRule"/>
</dbReference>
<dbReference type="GO" id="GO:0000049">
    <property type="term" value="F:tRNA binding"/>
    <property type="evidence" value="ECO:0007669"/>
    <property type="project" value="UniProtKB-UniRule"/>
</dbReference>
<dbReference type="GO" id="GO:0042245">
    <property type="term" value="P:RNA repair"/>
    <property type="evidence" value="ECO:0007669"/>
    <property type="project" value="UniProtKB-KW"/>
</dbReference>
<dbReference type="GO" id="GO:0001680">
    <property type="term" value="P:tRNA 3'-terminal CCA addition"/>
    <property type="evidence" value="ECO:0007669"/>
    <property type="project" value="UniProtKB-UniRule"/>
</dbReference>
<dbReference type="CDD" id="cd00077">
    <property type="entry name" value="HDc"/>
    <property type="match status" value="1"/>
</dbReference>
<dbReference type="CDD" id="cd05398">
    <property type="entry name" value="NT_ClassII-CCAase"/>
    <property type="match status" value="1"/>
</dbReference>
<dbReference type="FunFam" id="1.10.3090.10:FF:000001">
    <property type="entry name" value="Multifunctional CCA protein"/>
    <property type="match status" value="1"/>
</dbReference>
<dbReference type="FunFam" id="3.30.460.10:FF:000016">
    <property type="entry name" value="Multifunctional CCA protein"/>
    <property type="match status" value="1"/>
</dbReference>
<dbReference type="Gene3D" id="3.30.460.10">
    <property type="entry name" value="Beta Polymerase, domain 2"/>
    <property type="match status" value="1"/>
</dbReference>
<dbReference type="Gene3D" id="1.10.3090.10">
    <property type="entry name" value="cca-adding enzyme, domain 2"/>
    <property type="match status" value="1"/>
</dbReference>
<dbReference type="HAMAP" id="MF_01261">
    <property type="entry name" value="CCA_bact_type1"/>
    <property type="match status" value="1"/>
</dbReference>
<dbReference type="HAMAP" id="MF_01262">
    <property type="entry name" value="CCA_bact_type2"/>
    <property type="match status" value="1"/>
</dbReference>
<dbReference type="InterPro" id="IPR012006">
    <property type="entry name" value="CCA_bact"/>
</dbReference>
<dbReference type="InterPro" id="IPR003607">
    <property type="entry name" value="HD/PDEase_dom"/>
</dbReference>
<dbReference type="InterPro" id="IPR006674">
    <property type="entry name" value="HD_domain"/>
</dbReference>
<dbReference type="InterPro" id="IPR043519">
    <property type="entry name" value="NT_sf"/>
</dbReference>
<dbReference type="InterPro" id="IPR002646">
    <property type="entry name" value="PolA_pol_head_dom"/>
</dbReference>
<dbReference type="InterPro" id="IPR032828">
    <property type="entry name" value="PolyA_RNA-bd"/>
</dbReference>
<dbReference type="InterPro" id="IPR050124">
    <property type="entry name" value="tRNA_CCA-adding_enzyme"/>
</dbReference>
<dbReference type="NCBIfam" id="NF008137">
    <property type="entry name" value="PRK10885.1"/>
    <property type="match status" value="1"/>
</dbReference>
<dbReference type="PANTHER" id="PTHR47545">
    <property type="entry name" value="MULTIFUNCTIONAL CCA PROTEIN"/>
    <property type="match status" value="1"/>
</dbReference>
<dbReference type="PANTHER" id="PTHR47545:SF1">
    <property type="entry name" value="MULTIFUNCTIONAL CCA PROTEIN"/>
    <property type="match status" value="1"/>
</dbReference>
<dbReference type="Pfam" id="PF01966">
    <property type="entry name" value="HD"/>
    <property type="match status" value="1"/>
</dbReference>
<dbReference type="Pfam" id="PF01743">
    <property type="entry name" value="PolyA_pol"/>
    <property type="match status" value="1"/>
</dbReference>
<dbReference type="Pfam" id="PF12627">
    <property type="entry name" value="PolyA_pol_RNAbd"/>
    <property type="match status" value="1"/>
</dbReference>
<dbReference type="PIRSF" id="PIRSF000813">
    <property type="entry name" value="CCA_bact"/>
    <property type="match status" value="1"/>
</dbReference>
<dbReference type="SUPFAM" id="SSF81301">
    <property type="entry name" value="Nucleotidyltransferase"/>
    <property type="match status" value="1"/>
</dbReference>
<dbReference type="SUPFAM" id="SSF81891">
    <property type="entry name" value="Poly A polymerase C-terminal region-like"/>
    <property type="match status" value="1"/>
</dbReference>
<dbReference type="PROSITE" id="PS51831">
    <property type="entry name" value="HD"/>
    <property type="match status" value="1"/>
</dbReference>
<sequence>MKKYLVGGAVRDGLLQLPVKERDWVVVGATPQEMLAQGYQHVGKDFPVFLHPDSREEYALARTERKSGQGYTGFICYASPEVTLEEDLRRRDLTINAIARDDEGNLIDPYQGQQDIRQRWLRHVSDAFGEDPLRVLRVARFAARFAHLNFRIAPETMALMQQMTDELPLLAPERVWKETERTLATRNPQVYFQVLRDCGALKALFPEVDALFGVPAPAKWHPEIDTGIHTLMTVSMAARLTDDIAVRFATLCHDVGKALTPRELWPSHHGHGPAGVKVVEALCQRLKVPNPLRDLATIVARYHDLLHGAQSLTPKTLIKLFSAIDVWRRPARLEQMILASEADARGRTGFENHAYPQGDFLRDAFRVASSVSARDVMAAGFSGAQIGEELNRRRQQALASWKRQQENSDTETIQD</sequence>
<gene>
    <name evidence="1" type="primary">cca</name>
    <name type="ordered locus">SG0258</name>
</gene>
<proteinExistence type="inferred from homology"/>
<evidence type="ECO:0000255" key="1">
    <source>
        <dbReference type="HAMAP-Rule" id="MF_01261"/>
    </source>
</evidence>
<reference key="1">
    <citation type="journal article" date="2006" name="Genome Res.">
        <title>Massive genome erosion and functional adaptations provide insights into the symbiotic lifestyle of Sodalis glossinidius in the tsetse host.</title>
        <authorList>
            <person name="Toh H."/>
            <person name="Weiss B.L."/>
            <person name="Perkin S.A.H."/>
            <person name="Yamashita A."/>
            <person name="Oshima K."/>
            <person name="Hattori M."/>
            <person name="Aksoy S."/>
        </authorList>
    </citation>
    <scope>NUCLEOTIDE SEQUENCE [LARGE SCALE GENOMIC DNA]</scope>
    <source>
        <strain>morsitans</strain>
    </source>
</reference>
<accession>Q2NWE2</accession>
<comment type="function">
    <text evidence="1">Catalyzes the addition and repair of the essential 3'-terminal CCA sequence in tRNAs without using a nucleic acid template. Adds these three nucleotides in the order of C, C, and A to the tRNA nucleotide-73, using CTP and ATP as substrates and producing inorganic pyrophosphate. tRNA 3'-terminal CCA addition is required both for tRNA processing and repair. Also involved in tRNA surveillance by mediating tandem CCA addition to generate a CCACCA at the 3' terminus of unstable tRNAs. While stable tRNAs receive only 3'-terminal CCA, unstable tRNAs are marked with CCACCA and rapidly degraded.</text>
</comment>
<comment type="catalytic activity">
    <reaction evidence="1">
        <text>a tRNA precursor + 2 CTP + ATP = a tRNA with a 3' CCA end + 3 diphosphate</text>
        <dbReference type="Rhea" id="RHEA:14433"/>
        <dbReference type="Rhea" id="RHEA-COMP:10465"/>
        <dbReference type="Rhea" id="RHEA-COMP:10468"/>
        <dbReference type="ChEBI" id="CHEBI:30616"/>
        <dbReference type="ChEBI" id="CHEBI:33019"/>
        <dbReference type="ChEBI" id="CHEBI:37563"/>
        <dbReference type="ChEBI" id="CHEBI:74896"/>
        <dbReference type="ChEBI" id="CHEBI:83071"/>
        <dbReference type="EC" id="2.7.7.72"/>
    </reaction>
</comment>
<comment type="catalytic activity">
    <reaction evidence="1">
        <text>a tRNA with a 3' CCA end + 2 CTP + ATP = a tRNA with a 3' CCACCA end + 3 diphosphate</text>
        <dbReference type="Rhea" id="RHEA:76235"/>
        <dbReference type="Rhea" id="RHEA-COMP:10468"/>
        <dbReference type="Rhea" id="RHEA-COMP:18655"/>
        <dbReference type="ChEBI" id="CHEBI:30616"/>
        <dbReference type="ChEBI" id="CHEBI:33019"/>
        <dbReference type="ChEBI" id="CHEBI:37563"/>
        <dbReference type="ChEBI" id="CHEBI:83071"/>
        <dbReference type="ChEBI" id="CHEBI:195187"/>
    </reaction>
    <physiologicalReaction direction="left-to-right" evidence="1">
        <dbReference type="Rhea" id="RHEA:76236"/>
    </physiologicalReaction>
</comment>
<comment type="cofactor">
    <cofactor evidence="1">
        <name>Mg(2+)</name>
        <dbReference type="ChEBI" id="CHEBI:18420"/>
    </cofactor>
    <text evidence="1">Magnesium is required for nucleotidyltransferase activity.</text>
</comment>
<comment type="cofactor">
    <cofactor evidence="1">
        <name>Ni(2+)</name>
        <dbReference type="ChEBI" id="CHEBI:49786"/>
    </cofactor>
    <text evidence="1">Nickel for phosphatase activity.</text>
</comment>
<comment type="subunit">
    <text evidence="1">Monomer. Can also form homodimers and oligomers.</text>
</comment>
<comment type="domain">
    <text evidence="1">Comprises two domains: an N-terminal domain containing the nucleotidyltransferase activity and a C-terminal HD domain associated with both phosphodiesterase and phosphatase activities.</text>
</comment>
<comment type="miscellaneous">
    <text evidence="1">A single active site specifically recognizes both ATP and CTP and is responsible for their addition.</text>
</comment>
<comment type="similarity">
    <text evidence="1">Belongs to the tRNA nucleotidyltransferase/poly(A) polymerase family. Bacterial CCA-adding enzyme type 1 subfamily.</text>
</comment>
<name>CCA_SODGM</name>
<feature type="chain" id="PRO_1000054303" description="Multifunctional CCA protein">
    <location>
        <begin position="1"/>
        <end position="415"/>
    </location>
</feature>
<feature type="domain" description="HD" evidence="1">
    <location>
        <begin position="226"/>
        <end position="327"/>
    </location>
</feature>
<feature type="binding site" evidence="1">
    <location>
        <position position="8"/>
    </location>
    <ligand>
        <name>ATP</name>
        <dbReference type="ChEBI" id="CHEBI:30616"/>
    </ligand>
</feature>
<feature type="binding site" evidence="1">
    <location>
        <position position="8"/>
    </location>
    <ligand>
        <name>CTP</name>
        <dbReference type="ChEBI" id="CHEBI:37563"/>
    </ligand>
</feature>
<feature type="binding site" evidence="1">
    <location>
        <position position="11"/>
    </location>
    <ligand>
        <name>ATP</name>
        <dbReference type="ChEBI" id="CHEBI:30616"/>
    </ligand>
</feature>
<feature type="binding site" evidence="1">
    <location>
        <position position="11"/>
    </location>
    <ligand>
        <name>CTP</name>
        <dbReference type="ChEBI" id="CHEBI:37563"/>
    </ligand>
</feature>
<feature type="binding site" evidence="1">
    <location>
        <position position="21"/>
    </location>
    <ligand>
        <name>Mg(2+)</name>
        <dbReference type="ChEBI" id="CHEBI:18420"/>
    </ligand>
</feature>
<feature type="binding site" evidence="1">
    <location>
        <position position="23"/>
    </location>
    <ligand>
        <name>Mg(2+)</name>
        <dbReference type="ChEBI" id="CHEBI:18420"/>
    </ligand>
</feature>
<feature type="binding site" evidence="1">
    <location>
        <position position="91"/>
    </location>
    <ligand>
        <name>ATP</name>
        <dbReference type="ChEBI" id="CHEBI:30616"/>
    </ligand>
</feature>
<feature type="binding site" evidence="1">
    <location>
        <position position="91"/>
    </location>
    <ligand>
        <name>CTP</name>
        <dbReference type="ChEBI" id="CHEBI:37563"/>
    </ligand>
</feature>
<feature type="binding site" evidence="1">
    <location>
        <position position="137"/>
    </location>
    <ligand>
        <name>ATP</name>
        <dbReference type="ChEBI" id="CHEBI:30616"/>
    </ligand>
</feature>
<feature type="binding site" evidence="1">
    <location>
        <position position="137"/>
    </location>
    <ligand>
        <name>CTP</name>
        <dbReference type="ChEBI" id="CHEBI:37563"/>
    </ligand>
</feature>
<feature type="binding site" evidence="1">
    <location>
        <position position="140"/>
    </location>
    <ligand>
        <name>ATP</name>
        <dbReference type="ChEBI" id="CHEBI:30616"/>
    </ligand>
</feature>
<feature type="binding site" evidence="1">
    <location>
        <position position="140"/>
    </location>
    <ligand>
        <name>CTP</name>
        <dbReference type="ChEBI" id="CHEBI:37563"/>
    </ligand>
</feature>